<keyword id="KW-0002">3D-structure</keyword>
<keyword id="KW-0007">Acetylation</keyword>
<keyword id="KW-0106">Calcium</keyword>
<keyword id="KW-0148">Chlorophyll</keyword>
<keyword id="KW-0150">Chloroplast</keyword>
<keyword id="KW-0157">Chromophore</keyword>
<keyword id="KW-0903">Direct protein sequencing</keyword>
<keyword id="KW-0249">Electron transport</keyword>
<keyword id="KW-0359">Herbicide resistance</keyword>
<keyword id="KW-0408">Iron</keyword>
<keyword id="KW-0460">Magnesium</keyword>
<keyword id="KW-0464">Manganese</keyword>
<keyword id="KW-0472">Membrane</keyword>
<keyword id="KW-0479">Metal-binding</keyword>
<keyword id="KW-0560">Oxidoreductase</keyword>
<keyword id="KW-0597">Phosphoprotein</keyword>
<keyword id="KW-0602">Photosynthesis</keyword>
<keyword id="KW-0604">Photosystem II</keyword>
<keyword id="KW-0934">Plastid</keyword>
<keyword id="KW-1185">Reference proteome</keyword>
<keyword id="KW-0793">Thylakoid</keyword>
<keyword id="KW-0812">Transmembrane</keyword>
<keyword id="KW-1133">Transmembrane helix</keyword>
<keyword id="KW-0813">Transport</keyword>
<gene>
    <name evidence="1" type="primary">psbA</name>
</gene>
<reference key="1">
    <citation type="journal article" date="1982" name="Proc. Natl. Acad. Sci. U.S.A.">
        <title>Nucleotide sequence of the gene for the M-r 32,000 thylakoid membrane protein from Spinacia oleracea and Nicotiana debneyi predicts a totally conserved primary translation product of M-r 38,950.</title>
        <authorList>
            <person name="Zurawski G."/>
            <person name="Bohnert H.J."/>
            <person name="Whitfeld P.R."/>
            <person name="Bottomley W."/>
        </authorList>
    </citation>
    <scope>NUCLEOTIDE SEQUENCE [GENOMIC DNA]</scope>
</reference>
<reference key="2">
    <citation type="journal article" date="2001" name="Plant Mol. Biol.">
        <title>The plastid chromosome of spinach (Spinacia oleracea): complete nucleotide sequence and gene organization.</title>
        <authorList>
            <person name="Schmitz-Linneweber C."/>
            <person name="Maier R.M."/>
            <person name="Alcaraz J.-P."/>
            <person name="Cottet A."/>
            <person name="Herrmann R.G."/>
            <person name="Mache R."/>
        </authorList>
    </citation>
    <scope>NUCLEOTIDE SEQUENCE [LARGE SCALE GENOMIC DNA]</scope>
    <source>
        <strain>cv. Geant d'hiver</strain>
        <strain>cv. Monatol</strain>
    </source>
</reference>
<reference key="3">
    <citation type="journal article" date="1988" name="J. Biol. Chem.">
        <title>Tandem mass spectrometry reveals that three photosystem II proteins of spinach chloroplasts contain N-acetyl-O-phosphothreonine at their NH2 termini.</title>
        <authorList>
            <person name="Michel H."/>
            <person name="Hunt D.F."/>
            <person name="Shabanowitz J."/>
            <person name="Bennett J."/>
        </authorList>
    </citation>
    <scope>PROTEIN SEQUENCE OF 2-8</scope>
    <scope>ACETYLATION AT THR-2</scope>
    <scope>PHOSPHORYLATION AT THR-2</scope>
</reference>
<reference key="4">
    <citation type="journal article" date="1988" name="FEBS Lett.">
        <title>COOH-terminal residues of D1 and the 44 kDa CPa-2 at spinach photosystem II core complex.</title>
        <authorList>
            <person name="Takahashi M."/>
            <person name="Shiraishi T."/>
            <person name="Asada K."/>
        </authorList>
    </citation>
    <scope>PROTEOLYTIC PROCESSING</scope>
</reference>
<reference key="5">
    <citation type="journal article" date="1998" name="Protein Sci.">
        <title>Electrospray-ionization mass spectrometry of intact intrinsic membrane proteins.</title>
        <authorList>
            <person name="Whitelegge J.P."/>
            <person name="Gundersen C.B."/>
            <person name="Faull K.F."/>
        </authorList>
    </citation>
    <scope>MASS SPECTROMETRY</scope>
</reference>
<reference key="6">
    <citation type="journal article" date="1996" name="Biochemistry">
        <title>A model for the photosystem II reaction center core including the structure of the primary donor P680.</title>
        <authorList>
            <person name="Svensson B."/>
            <person name="Etchebest C."/>
            <person name="Tuffery P."/>
            <person name="van Kan P."/>
            <person name="Smith J."/>
            <person name="Styring S."/>
        </authorList>
    </citation>
    <scope>3D-STRUCTURE MODELING</scope>
</reference>
<geneLocation type="chloroplast"/>
<name>PSBA_SPIOL</name>
<comment type="function">
    <text>This is one of the two reaction center proteins of photosystem II.</text>
</comment>
<comment type="function">
    <text evidence="1">Photosystem II (PSII) is a light-driven water:plastoquinone oxidoreductase that uses light energy to abstract electrons from H(2)O, generating O(2) and a proton gradient subsequently used for ATP formation. It consists of a core antenna complex that captures photons, and an electron transfer chain that converts photonic excitation into a charge separation. The D1/D2 (PsbA/PsbD) reaction center heterodimer binds P680, the primary electron donor of PSII as well as several subsequent electron acceptors.</text>
</comment>
<comment type="catalytic activity">
    <reaction evidence="1">
        <text>2 a plastoquinone + 4 hnu + 2 H2O = 2 a plastoquinol + O2</text>
        <dbReference type="Rhea" id="RHEA:36359"/>
        <dbReference type="Rhea" id="RHEA-COMP:9561"/>
        <dbReference type="Rhea" id="RHEA-COMP:9562"/>
        <dbReference type="ChEBI" id="CHEBI:15377"/>
        <dbReference type="ChEBI" id="CHEBI:15379"/>
        <dbReference type="ChEBI" id="CHEBI:17757"/>
        <dbReference type="ChEBI" id="CHEBI:30212"/>
        <dbReference type="ChEBI" id="CHEBI:62192"/>
        <dbReference type="EC" id="1.10.3.9"/>
    </reaction>
</comment>
<comment type="cofactor">
    <text evidence="1">The D1/D2 heterodimer binds P680, chlorophylls that are the primary electron donor of PSII, and subsequent electron acceptors. It shares a non-heme iron and each subunit binds pheophytin, quinone, additional chlorophylls, carotenoids and lipids. D1 provides most of the ligands for the Mn4-Ca-O5 cluster of the oxygen-evolving complex (OEC). There is also a Cl(-1) ion associated with D1 and D2, which is required for oxygen evolution. The PSII complex binds additional chlorophylls, carotenoids and specific lipids.</text>
</comment>
<comment type="subunit">
    <text evidence="1">PSII is composed of 1 copy each of membrane proteins PsbA, PsbB, PsbC, PsbD, PsbE, PsbF, PsbH, PsbI, PsbJ, PsbK, PsbL, PsbM, PsbT, PsbX, PsbY, PsbZ, Psb30/Ycf12, at least 3 peripheral proteins of the oxygen-evolving complex and a large number of cofactors. It forms dimeric complexes.</text>
</comment>
<comment type="subcellular location">
    <subcellularLocation>
        <location evidence="1">Plastid</location>
        <location evidence="1">Chloroplast thylakoid membrane</location>
        <topology evidence="1">Multi-pass membrane protein</topology>
    </subcellularLocation>
</comment>
<comment type="PTM">
    <text evidence="1">Tyr-161 forms a radical intermediate that is referred to as redox-active TyrZ, YZ or Y-Z.</text>
</comment>
<comment type="PTM">
    <text evidence="1">C-terminally processed by CTPA; processing is essential to allow assembly of the oxygen-evolving complex and thus photosynthetic growth.</text>
</comment>
<comment type="mass spectrometry"/>
<comment type="miscellaneous">
    <text evidence="1">2 of the reaction center chlorophylls (ChlD1 and ChlD2) are entirely coordinated by water.</text>
</comment>
<comment type="miscellaneous">
    <text evidence="1">Herbicides such as atrazine, BNT, diuron or ioxynil bind in the Q(B) binding site and block subsequent electron transfer.</text>
</comment>
<comment type="similarity">
    <text evidence="1">Belongs to the reaction center PufL/M/PsbA/D family.</text>
</comment>
<proteinExistence type="evidence at protein level"/>
<feature type="initiator methionine" description="Removed" evidence="2">
    <location>
        <position position="1"/>
    </location>
</feature>
<feature type="chain" id="PRO_0000030246" description="Photosystem II protein D1" evidence="1">
    <location>
        <begin position="2"/>
        <end position="344"/>
    </location>
</feature>
<feature type="propeptide" id="PRO_0000030247" evidence="1">
    <location>
        <begin position="345"/>
        <end position="353"/>
    </location>
</feature>
<feature type="transmembrane region" description="Helical" evidence="1">
    <location>
        <begin position="29"/>
        <end position="46"/>
    </location>
</feature>
<feature type="transmembrane region" description="Helical" evidence="1">
    <location>
        <begin position="118"/>
        <end position="133"/>
    </location>
</feature>
<feature type="transmembrane region" description="Helical" evidence="1">
    <location>
        <begin position="142"/>
        <end position="156"/>
    </location>
</feature>
<feature type="transmembrane region" description="Helical" evidence="1">
    <location>
        <begin position="197"/>
        <end position="218"/>
    </location>
</feature>
<feature type="transmembrane region" description="Helical" evidence="1">
    <location>
        <begin position="274"/>
        <end position="288"/>
    </location>
</feature>
<feature type="binding site" description="axial binding residue" evidence="1">
    <location>
        <position position="118"/>
    </location>
    <ligand>
        <name>chlorophyll a</name>
        <dbReference type="ChEBI" id="CHEBI:58416"/>
        <label>ChlzD1</label>
    </ligand>
    <ligandPart>
        <name>Mg</name>
        <dbReference type="ChEBI" id="CHEBI:25107"/>
    </ligandPart>
</feature>
<feature type="binding site" evidence="1">
    <location>
        <position position="126"/>
    </location>
    <ligand>
        <name>pheophytin a</name>
        <dbReference type="ChEBI" id="CHEBI:136840"/>
        <label>D1</label>
    </ligand>
</feature>
<feature type="binding site" evidence="1">
    <location>
        <position position="170"/>
    </location>
    <ligand>
        <name>[CaMn4O5] cluster</name>
        <dbReference type="ChEBI" id="CHEBI:189552"/>
    </ligand>
</feature>
<feature type="binding site" evidence="1">
    <location>
        <position position="189"/>
    </location>
    <ligand>
        <name>[CaMn4O5] cluster</name>
        <dbReference type="ChEBI" id="CHEBI:189552"/>
    </ligand>
</feature>
<feature type="binding site" description="axial binding residue" evidence="1">
    <location>
        <position position="198"/>
    </location>
    <ligand>
        <name>chlorophyll a</name>
        <dbReference type="ChEBI" id="CHEBI:58416"/>
        <label>PD1</label>
    </ligand>
    <ligandPart>
        <name>Mg</name>
        <dbReference type="ChEBI" id="CHEBI:25107"/>
    </ligandPart>
</feature>
<feature type="binding site" evidence="1">
    <location>
        <position position="215"/>
    </location>
    <ligand>
        <name>a quinone</name>
        <dbReference type="ChEBI" id="CHEBI:132124"/>
        <label>B</label>
    </ligand>
</feature>
<feature type="binding site" evidence="1">
    <location>
        <position position="215"/>
    </location>
    <ligand>
        <name>Fe cation</name>
        <dbReference type="ChEBI" id="CHEBI:24875"/>
        <note>ligand shared with heterodimeric partner</note>
    </ligand>
</feature>
<feature type="binding site" evidence="1">
    <location>
        <begin position="264"/>
        <end position="265"/>
    </location>
    <ligand>
        <name>a quinone</name>
        <dbReference type="ChEBI" id="CHEBI:132124"/>
        <label>B</label>
    </ligand>
</feature>
<feature type="binding site" evidence="1">
    <location>
        <position position="272"/>
    </location>
    <ligand>
        <name>Fe cation</name>
        <dbReference type="ChEBI" id="CHEBI:24875"/>
        <note>ligand shared with heterodimeric partner</note>
    </ligand>
</feature>
<feature type="binding site" evidence="1">
    <location>
        <position position="332"/>
    </location>
    <ligand>
        <name>[CaMn4O5] cluster</name>
        <dbReference type="ChEBI" id="CHEBI:189552"/>
    </ligand>
</feature>
<feature type="binding site" evidence="1">
    <location>
        <position position="333"/>
    </location>
    <ligand>
        <name>[CaMn4O5] cluster</name>
        <dbReference type="ChEBI" id="CHEBI:189552"/>
    </ligand>
</feature>
<feature type="binding site" evidence="1">
    <location>
        <position position="342"/>
    </location>
    <ligand>
        <name>[CaMn4O5] cluster</name>
        <dbReference type="ChEBI" id="CHEBI:189552"/>
    </ligand>
</feature>
<feature type="binding site" evidence="1">
    <location>
        <position position="344"/>
    </location>
    <ligand>
        <name>[CaMn4O5] cluster</name>
        <dbReference type="ChEBI" id="CHEBI:189552"/>
    </ligand>
</feature>
<feature type="site" description="Tyrosine radical intermediate" evidence="1">
    <location>
        <position position="161"/>
    </location>
</feature>
<feature type="site" description="Stabilizes free radical intermediate" evidence="1">
    <location>
        <position position="190"/>
    </location>
</feature>
<feature type="site" description="Cleavage; by CTPA" evidence="1">
    <location>
        <begin position="344"/>
        <end position="345"/>
    </location>
</feature>
<feature type="modified residue" description="N-acetylthreonine" evidence="1 2">
    <location>
        <position position="2"/>
    </location>
</feature>
<feature type="modified residue" description="Phosphothreonine" evidence="1 2">
    <location>
        <position position="2"/>
    </location>
</feature>
<feature type="helix" evidence="5">
    <location>
        <begin position="13"/>
        <end position="21"/>
    </location>
</feature>
<feature type="strand" evidence="5">
    <location>
        <begin position="26"/>
        <end position="28"/>
    </location>
</feature>
<feature type="helix" evidence="5">
    <location>
        <begin position="32"/>
        <end position="54"/>
    </location>
</feature>
<feature type="strand" evidence="5">
    <location>
        <begin position="62"/>
        <end position="64"/>
    </location>
</feature>
<feature type="helix" evidence="5">
    <location>
        <begin position="71"/>
        <end position="73"/>
    </location>
</feature>
<feature type="turn" evidence="5">
    <location>
        <begin position="77"/>
        <end position="79"/>
    </location>
</feature>
<feature type="turn" evidence="5">
    <location>
        <begin position="87"/>
        <end position="91"/>
    </location>
</feature>
<feature type="turn" evidence="5">
    <location>
        <begin position="96"/>
        <end position="98"/>
    </location>
</feature>
<feature type="strand" evidence="5">
    <location>
        <begin position="99"/>
        <end position="101"/>
    </location>
</feature>
<feature type="helix" evidence="5">
    <location>
        <begin position="102"/>
        <end position="107"/>
    </location>
</feature>
<feature type="helix" evidence="5">
    <location>
        <begin position="110"/>
        <end position="136"/>
    </location>
</feature>
<feature type="helix" evidence="5">
    <location>
        <begin position="143"/>
        <end position="158"/>
    </location>
</feature>
<feature type="helix" evidence="5">
    <location>
        <begin position="160"/>
        <end position="165"/>
    </location>
</feature>
<feature type="helix" evidence="5">
    <location>
        <begin position="168"/>
        <end position="170"/>
    </location>
</feature>
<feature type="helix" evidence="5">
    <location>
        <begin position="176"/>
        <end position="190"/>
    </location>
</feature>
<feature type="helix" evidence="5">
    <location>
        <begin position="192"/>
        <end position="194"/>
    </location>
</feature>
<feature type="helix" evidence="5">
    <location>
        <begin position="196"/>
        <end position="220"/>
    </location>
</feature>
<feature type="strand" evidence="5">
    <location>
        <begin position="223"/>
        <end position="225"/>
    </location>
</feature>
<feature type="helix" evidence="5">
    <location>
        <begin position="233"/>
        <end position="236"/>
    </location>
</feature>
<feature type="helix" evidence="5">
    <location>
        <begin position="248"/>
        <end position="258"/>
    </location>
</feature>
<feature type="helix" evidence="5">
    <location>
        <begin position="268"/>
        <end position="293"/>
    </location>
</feature>
<feature type="turn" evidence="5">
    <location>
        <begin position="294"/>
        <end position="296"/>
    </location>
</feature>
<feature type="helix" evidence="5">
    <location>
        <begin position="317"/>
        <end position="331"/>
    </location>
</feature>
<feature type="turn" evidence="5">
    <location>
        <begin position="332"/>
        <end position="336"/>
    </location>
</feature>
<dbReference type="EC" id="1.10.3.9" evidence="1"/>
<dbReference type="EMBL" id="AJ400848">
    <property type="protein sequence ID" value="CAB88705.1"/>
    <property type="molecule type" value="Genomic_DNA"/>
</dbReference>
<dbReference type="PIR" id="A38055">
    <property type="entry name" value="FMSP32"/>
</dbReference>
<dbReference type="RefSeq" id="NP_054912.1">
    <property type="nucleotide sequence ID" value="NC_002202.1"/>
</dbReference>
<dbReference type="PDB" id="3JCU">
    <property type="method" value="EM"/>
    <property type="resolution" value="3.20 A"/>
    <property type="chains" value="A/a=1-344"/>
</dbReference>
<dbReference type="PDB" id="8Z9D">
    <property type="method" value="EM"/>
    <property type="resolution" value="3.22 A"/>
    <property type="chains" value="A/AA/Aa/a=1-351"/>
</dbReference>
<dbReference type="PDBsum" id="3JCU"/>
<dbReference type="PDBsum" id="8Z9D"/>
<dbReference type="EMDB" id="EMD-39860"/>
<dbReference type="SMR" id="P69560"/>
<dbReference type="DIP" id="DIP-62007N"/>
<dbReference type="FunCoup" id="P69560">
    <property type="interactions" value="223"/>
</dbReference>
<dbReference type="IntAct" id="P69560">
    <property type="interactions" value="1"/>
</dbReference>
<dbReference type="STRING" id="3562.P69560"/>
<dbReference type="BindingDB" id="P69560"/>
<dbReference type="ChEMBL" id="CHEMBL2366481"/>
<dbReference type="CarbonylDB" id="P69560"/>
<dbReference type="iPTMnet" id="P69560"/>
<dbReference type="GeneID" id="2715607"/>
<dbReference type="KEGG" id="soe:2715607"/>
<dbReference type="InParanoid" id="P69560"/>
<dbReference type="OrthoDB" id="143at2759"/>
<dbReference type="PRO" id="PR:P69560"/>
<dbReference type="Proteomes" id="UP001155700">
    <property type="component" value="Chloroplast Pltd"/>
</dbReference>
<dbReference type="GO" id="GO:0009535">
    <property type="term" value="C:chloroplast thylakoid membrane"/>
    <property type="evidence" value="ECO:0007669"/>
    <property type="project" value="UniProtKB-SubCell"/>
</dbReference>
<dbReference type="GO" id="GO:0009523">
    <property type="term" value="C:photosystem II"/>
    <property type="evidence" value="ECO:0000318"/>
    <property type="project" value="GO_Central"/>
</dbReference>
<dbReference type="GO" id="GO:0016168">
    <property type="term" value="F:chlorophyll binding"/>
    <property type="evidence" value="ECO:0007669"/>
    <property type="project" value="UniProtKB-UniRule"/>
</dbReference>
<dbReference type="GO" id="GO:0045156">
    <property type="term" value="F:electron transporter, transferring electrons within the cyclic electron transport pathway of photosynthesis activity"/>
    <property type="evidence" value="ECO:0007669"/>
    <property type="project" value="InterPro"/>
</dbReference>
<dbReference type="GO" id="GO:0005506">
    <property type="term" value="F:iron ion binding"/>
    <property type="evidence" value="ECO:0007669"/>
    <property type="project" value="UniProtKB-UniRule"/>
</dbReference>
<dbReference type="GO" id="GO:0016682">
    <property type="term" value="F:oxidoreductase activity, acting on diphenols and related substances as donors, oxygen as acceptor"/>
    <property type="evidence" value="ECO:0007669"/>
    <property type="project" value="UniProtKB-UniRule"/>
</dbReference>
<dbReference type="GO" id="GO:0010242">
    <property type="term" value="F:oxygen evolving activity"/>
    <property type="evidence" value="ECO:0007669"/>
    <property type="project" value="UniProtKB-EC"/>
</dbReference>
<dbReference type="GO" id="GO:0009772">
    <property type="term" value="P:photosynthetic electron transport in photosystem II"/>
    <property type="evidence" value="ECO:0007669"/>
    <property type="project" value="InterPro"/>
</dbReference>
<dbReference type="GO" id="GO:0009635">
    <property type="term" value="P:response to herbicide"/>
    <property type="evidence" value="ECO:0007669"/>
    <property type="project" value="UniProtKB-KW"/>
</dbReference>
<dbReference type="CDD" id="cd09289">
    <property type="entry name" value="Photosystem-II_D1"/>
    <property type="match status" value="1"/>
</dbReference>
<dbReference type="FunFam" id="1.20.85.10:FF:000002">
    <property type="entry name" value="Photosystem II protein D1"/>
    <property type="match status" value="1"/>
</dbReference>
<dbReference type="Gene3D" id="1.20.85.10">
    <property type="entry name" value="Photosystem II protein D1-like"/>
    <property type="match status" value="1"/>
</dbReference>
<dbReference type="HAMAP" id="MF_01379">
    <property type="entry name" value="PSII_PsbA_D1"/>
    <property type="match status" value="1"/>
</dbReference>
<dbReference type="InterPro" id="IPR055266">
    <property type="entry name" value="D1/D2"/>
</dbReference>
<dbReference type="InterPro" id="IPR036854">
    <property type="entry name" value="Photo_II_D1/D2_sf"/>
</dbReference>
<dbReference type="InterPro" id="IPR000484">
    <property type="entry name" value="Photo_RC_L/M"/>
</dbReference>
<dbReference type="InterPro" id="IPR055265">
    <property type="entry name" value="Photo_RC_L/M_CS"/>
</dbReference>
<dbReference type="InterPro" id="IPR005867">
    <property type="entry name" value="PSII_D1"/>
</dbReference>
<dbReference type="NCBIfam" id="TIGR01151">
    <property type="entry name" value="psbA"/>
    <property type="match status" value="1"/>
</dbReference>
<dbReference type="PANTHER" id="PTHR33149:SF12">
    <property type="entry name" value="PHOTOSYSTEM II D2 PROTEIN"/>
    <property type="match status" value="1"/>
</dbReference>
<dbReference type="PANTHER" id="PTHR33149">
    <property type="entry name" value="PHOTOSYSTEM II PROTEIN D1"/>
    <property type="match status" value="1"/>
</dbReference>
<dbReference type="Pfam" id="PF00124">
    <property type="entry name" value="Photo_RC"/>
    <property type="match status" value="1"/>
</dbReference>
<dbReference type="PRINTS" id="PR00256">
    <property type="entry name" value="REACTNCENTRE"/>
</dbReference>
<dbReference type="SUPFAM" id="SSF81483">
    <property type="entry name" value="Bacterial photosystem II reaction centre, L and M subunits"/>
    <property type="match status" value="1"/>
</dbReference>
<dbReference type="PROSITE" id="PS00244">
    <property type="entry name" value="REACTION_CENTER"/>
    <property type="match status" value="1"/>
</dbReference>
<evidence type="ECO:0000255" key="1">
    <source>
        <dbReference type="HAMAP-Rule" id="MF_01379"/>
    </source>
</evidence>
<evidence type="ECO:0000269" key="2">
    <source>
    </source>
</evidence>
<evidence type="ECO:0000269" key="3">
    <source>
    </source>
</evidence>
<evidence type="ECO:0000303" key="4">
    <source>
    </source>
</evidence>
<evidence type="ECO:0007829" key="5">
    <source>
        <dbReference type="PDB" id="3JCU"/>
    </source>
</evidence>
<accession>P69560</accession>
<accession>P02955</accession>
<sequence>MTAILERRESESLWGRFCNWITSTENRLYIGWFGVLMIPTLLTATSVFIIAFIAAPPVDIDGIREPVSGSLLYGNNIISGAIIPTSAAIGLHFYPIWEAASVDEWLYNGGPYELIVLHFLLGVACYMGREWELSFRLGMRPWIAVAYSAPVAAATAVFLIYPIGQGSFSDGMPLGISGTFNFMIVFQAEHNILMHPFHMLGVAGVFGGSLFSAMHGSLVTSSLIRETTENESANEGYRFGQEEETYNIVAAHGYFGRLIFQYASFNNSRSLHFFLAAWPVVGIWFTALGISTMAFNLNGFNFNQSVVDSQGRVINTWADIINRANLGMEVMHERNAHNFPLDLAAIEAPSTNG</sequence>
<organism>
    <name type="scientific">Spinacia oleracea</name>
    <name type="common">Spinach</name>
    <dbReference type="NCBI Taxonomy" id="3562"/>
    <lineage>
        <taxon>Eukaryota</taxon>
        <taxon>Viridiplantae</taxon>
        <taxon>Streptophyta</taxon>
        <taxon>Embryophyta</taxon>
        <taxon>Tracheophyta</taxon>
        <taxon>Spermatophyta</taxon>
        <taxon>Magnoliopsida</taxon>
        <taxon>eudicotyledons</taxon>
        <taxon>Gunneridae</taxon>
        <taxon>Pentapetalae</taxon>
        <taxon>Caryophyllales</taxon>
        <taxon>Chenopodiaceae</taxon>
        <taxon>Chenopodioideae</taxon>
        <taxon>Anserineae</taxon>
        <taxon>Spinacia</taxon>
    </lineage>
</organism>
<protein>
    <recommendedName>
        <fullName evidence="1">Photosystem II protein D1</fullName>
        <shortName evidence="1">PSII D1 protein</shortName>
        <ecNumber evidence="1">1.10.3.9</ecNumber>
    </recommendedName>
    <alternativeName>
        <fullName evidence="4">32 kDa thylakoid membrane protein</fullName>
    </alternativeName>
    <alternativeName>
        <fullName evidence="1">Photosystem II Q(B) protein</fullName>
    </alternativeName>
</protein>